<dbReference type="EC" id="5.4.2.12" evidence="1"/>
<dbReference type="EMBL" id="CP000232">
    <property type="protein sequence ID" value="ABC18600.1"/>
    <property type="molecule type" value="Genomic_DNA"/>
</dbReference>
<dbReference type="RefSeq" id="YP_429143.1">
    <property type="nucleotide sequence ID" value="NC_007644.1"/>
</dbReference>
<dbReference type="SMR" id="Q2RLT9"/>
<dbReference type="STRING" id="264732.Moth_0265"/>
<dbReference type="EnsemblBacteria" id="ABC18600">
    <property type="protein sequence ID" value="ABC18600"/>
    <property type="gene ID" value="Moth_0265"/>
</dbReference>
<dbReference type="KEGG" id="mta:Moth_0265"/>
<dbReference type="PATRIC" id="fig|264732.11.peg.282"/>
<dbReference type="eggNOG" id="COG0696">
    <property type="taxonomic scope" value="Bacteria"/>
</dbReference>
<dbReference type="HOGENOM" id="CLU_026099_2_0_9"/>
<dbReference type="OrthoDB" id="9800863at2"/>
<dbReference type="UniPathway" id="UPA00109">
    <property type="reaction ID" value="UER00186"/>
</dbReference>
<dbReference type="GO" id="GO:0005829">
    <property type="term" value="C:cytosol"/>
    <property type="evidence" value="ECO:0007669"/>
    <property type="project" value="TreeGrafter"/>
</dbReference>
<dbReference type="GO" id="GO:0030145">
    <property type="term" value="F:manganese ion binding"/>
    <property type="evidence" value="ECO:0007669"/>
    <property type="project" value="UniProtKB-UniRule"/>
</dbReference>
<dbReference type="GO" id="GO:0004619">
    <property type="term" value="F:phosphoglycerate mutase activity"/>
    <property type="evidence" value="ECO:0007669"/>
    <property type="project" value="UniProtKB-EC"/>
</dbReference>
<dbReference type="GO" id="GO:0006007">
    <property type="term" value="P:glucose catabolic process"/>
    <property type="evidence" value="ECO:0007669"/>
    <property type="project" value="InterPro"/>
</dbReference>
<dbReference type="GO" id="GO:0006096">
    <property type="term" value="P:glycolytic process"/>
    <property type="evidence" value="ECO:0007669"/>
    <property type="project" value="UniProtKB-UniRule"/>
</dbReference>
<dbReference type="CDD" id="cd16010">
    <property type="entry name" value="iPGM"/>
    <property type="match status" value="1"/>
</dbReference>
<dbReference type="FunFam" id="3.40.1450.10:FF:000001">
    <property type="entry name" value="2,3-bisphosphoglycerate-independent phosphoglycerate mutase"/>
    <property type="match status" value="1"/>
</dbReference>
<dbReference type="Gene3D" id="3.40.720.10">
    <property type="entry name" value="Alkaline Phosphatase, subunit A"/>
    <property type="match status" value="1"/>
</dbReference>
<dbReference type="Gene3D" id="3.40.1450.10">
    <property type="entry name" value="BPG-independent phosphoglycerate mutase, domain B"/>
    <property type="match status" value="1"/>
</dbReference>
<dbReference type="HAMAP" id="MF_01038">
    <property type="entry name" value="GpmI"/>
    <property type="match status" value="1"/>
</dbReference>
<dbReference type="InterPro" id="IPR017850">
    <property type="entry name" value="Alkaline_phosphatase_core_sf"/>
</dbReference>
<dbReference type="InterPro" id="IPR011258">
    <property type="entry name" value="BPG-indep_PGM_N"/>
</dbReference>
<dbReference type="InterPro" id="IPR006124">
    <property type="entry name" value="Metalloenzyme"/>
</dbReference>
<dbReference type="InterPro" id="IPR036646">
    <property type="entry name" value="PGAM_B_sf"/>
</dbReference>
<dbReference type="InterPro" id="IPR005995">
    <property type="entry name" value="Pgm_bpd_ind"/>
</dbReference>
<dbReference type="NCBIfam" id="TIGR01307">
    <property type="entry name" value="pgm_bpd_ind"/>
    <property type="match status" value="1"/>
</dbReference>
<dbReference type="PANTHER" id="PTHR31637">
    <property type="entry name" value="2,3-BISPHOSPHOGLYCERATE-INDEPENDENT PHOSPHOGLYCERATE MUTASE"/>
    <property type="match status" value="1"/>
</dbReference>
<dbReference type="PANTHER" id="PTHR31637:SF0">
    <property type="entry name" value="2,3-BISPHOSPHOGLYCERATE-INDEPENDENT PHOSPHOGLYCERATE MUTASE"/>
    <property type="match status" value="1"/>
</dbReference>
<dbReference type="Pfam" id="PF06415">
    <property type="entry name" value="iPGM_N"/>
    <property type="match status" value="1"/>
</dbReference>
<dbReference type="Pfam" id="PF01676">
    <property type="entry name" value="Metalloenzyme"/>
    <property type="match status" value="1"/>
</dbReference>
<dbReference type="PIRSF" id="PIRSF001492">
    <property type="entry name" value="IPGAM"/>
    <property type="match status" value="1"/>
</dbReference>
<dbReference type="SUPFAM" id="SSF64158">
    <property type="entry name" value="2,3-Bisphosphoglycerate-independent phosphoglycerate mutase, substrate-binding domain"/>
    <property type="match status" value="1"/>
</dbReference>
<dbReference type="SUPFAM" id="SSF53649">
    <property type="entry name" value="Alkaline phosphatase-like"/>
    <property type="match status" value="1"/>
</dbReference>
<comment type="function">
    <text evidence="1">Catalyzes the interconversion of 2-phosphoglycerate and 3-phosphoglycerate.</text>
</comment>
<comment type="catalytic activity">
    <reaction evidence="1">
        <text>(2R)-2-phosphoglycerate = (2R)-3-phosphoglycerate</text>
        <dbReference type="Rhea" id="RHEA:15901"/>
        <dbReference type="ChEBI" id="CHEBI:58272"/>
        <dbReference type="ChEBI" id="CHEBI:58289"/>
        <dbReference type="EC" id="5.4.2.12"/>
    </reaction>
</comment>
<comment type="cofactor">
    <cofactor evidence="1">
        <name>Mn(2+)</name>
        <dbReference type="ChEBI" id="CHEBI:29035"/>
    </cofactor>
    <text evidence="1">Binds 2 manganese ions per subunit.</text>
</comment>
<comment type="pathway">
    <text evidence="1">Carbohydrate degradation; glycolysis; pyruvate from D-glyceraldehyde 3-phosphate: step 3/5.</text>
</comment>
<comment type="subunit">
    <text evidence="1">Monomer.</text>
</comment>
<comment type="similarity">
    <text evidence="1">Belongs to the BPG-independent phosphoglycerate mutase family.</text>
</comment>
<protein>
    <recommendedName>
        <fullName evidence="1">2,3-bisphosphoglycerate-independent phosphoglycerate mutase</fullName>
        <shortName evidence="1">BPG-independent PGAM</shortName>
        <shortName evidence="1">Phosphoglyceromutase</shortName>
        <shortName evidence="1">iPGM</shortName>
        <ecNumber evidence="1">5.4.2.12</ecNumber>
    </recommendedName>
</protein>
<proteinExistence type="inferred from homology"/>
<name>GPMI_MOOTA</name>
<accession>Q2RLT9</accession>
<organism>
    <name type="scientific">Moorella thermoacetica (strain ATCC 39073 / JCM 9320)</name>
    <dbReference type="NCBI Taxonomy" id="264732"/>
    <lineage>
        <taxon>Bacteria</taxon>
        <taxon>Bacillati</taxon>
        <taxon>Bacillota</taxon>
        <taxon>Clostridia</taxon>
        <taxon>Moorellales</taxon>
        <taxon>Moorellaceae</taxon>
        <taxon>Moorella</taxon>
    </lineage>
</organism>
<evidence type="ECO:0000255" key="1">
    <source>
        <dbReference type="HAMAP-Rule" id="MF_01038"/>
    </source>
</evidence>
<sequence length="513" mass="56056">MAIAVNRPLMLMILDGFGLGPEGEGNAISQGRLPNYRRLLAGYPHTRLRASGEAVGLPAGQMGNSEVGHLNIGAGRIVYQELTRISKAIRDGSFFSNAALVGAVRAAREHGGALHLMGLVSDGGVHSHLDHLYALLDLAKREGLERVYIHAFLDGRDVPPASAAGYLEQVEDECRQKGIGAIATIMGRYYAMDRDRRWERTARAYRALVAGEGHQASSPSEAIRASYERDITDEFVEPAVITRDGRPLATVREGDSVVFFNFRADRARQLTRAFVDRDFDAFERPGGRLDIQFVCLTQYDVTIPAPVAFPPQVLQNVLGEVIAGAGLKQLRIAETEKYAHVTFFFNGGVEEPFPGEDRLLIPSPKVATYDQKPSMSAREVTDAVLERLDKYDFIVLNFANPDMVGHTGDLAAAIAAVETVDECIGRIVQAMAERRAPLLLTADHGNAEEMREPDGEPHTAHTSNLVPFILVDDRYRGASLREGALEDVAPTVLDILHIQQPAEMTGKSLIVKG</sequence>
<gene>
    <name evidence="1" type="primary">gpmI</name>
    <name type="ordered locus">Moth_0265</name>
</gene>
<reference key="1">
    <citation type="journal article" date="2008" name="Environ. Microbiol.">
        <title>The complete genome sequence of Moorella thermoacetica (f. Clostridium thermoaceticum).</title>
        <authorList>
            <person name="Pierce E."/>
            <person name="Xie G."/>
            <person name="Barabote R.D."/>
            <person name="Saunders E."/>
            <person name="Han C.S."/>
            <person name="Detter J.C."/>
            <person name="Richardson P."/>
            <person name="Brettin T.S."/>
            <person name="Das A."/>
            <person name="Ljungdahl L.G."/>
            <person name="Ragsdale S.W."/>
        </authorList>
    </citation>
    <scope>NUCLEOTIDE SEQUENCE [LARGE SCALE GENOMIC DNA]</scope>
    <source>
        <strain>ATCC 39073 / JCM 9320</strain>
    </source>
</reference>
<feature type="chain" id="PRO_1000135903" description="2,3-bisphosphoglycerate-independent phosphoglycerate mutase">
    <location>
        <begin position="1"/>
        <end position="513"/>
    </location>
</feature>
<feature type="active site" description="Phosphoserine intermediate" evidence="1">
    <location>
        <position position="65"/>
    </location>
</feature>
<feature type="binding site" evidence="1">
    <location>
        <position position="15"/>
    </location>
    <ligand>
        <name>Mn(2+)</name>
        <dbReference type="ChEBI" id="CHEBI:29035"/>
        <label>2</label>
    </ligand>
</feature>
<feature type="binding site" evidence="1">
    <location>
        <position position="65"/>
    </location>
    <ligand>
        <name>Mn(2+)</name>
        <dbReference type="ChEBI" id="CHEBI:29035"/>
        <label>2</label>
    </ligand>
</feature>
<feature type="binding site" evidence="1">
    <location>
        <position position="126"/>
    </location>
    <ligand>
        <name>substrate</name>
    </ligand>
</feature>
<feature type="binding site" evidence="1">
    <location>
        <begin position="156"/>
        <end position="157"/>
    </location>
    <ligand>
        <name>substrate</name>
    </ligand>
</feature>
<feature type="binding site" evidence="1">
    <location>
        <position position="188"/>
    </location>
    <ligand>
        <name>substrate</name>
    </ligand>
</feature>
<feature type="binding site" evidence="1">
    <location>
        <position position="194"/>
    </location>
    <ligand>
        <name>substrate</name>
    </ligand>
</feature>
<feature type="binding site" evidence="1">
    <location>
        <begin position="263"/>
        <end position="266"/>
    </location>
    <ligand>
        <name>substrate</name>
    </ligand>
</feature>
<feature type="binding site" evidence="1">
    <location>
        <position position="337"/>
    </location>
    <ligand>
        <name>substrate</name>
    </ligand>
</feature>
<feature type="binding site" evidence="1">
    <location>
        <position position="402"/>
    </location>
    <ligand>
        <name>Mn(2+)</name>
        <dbReference type="ChEBI" id="CHEBI:29035"/>
        <label>1</label>
    </ligand>
</feature>
<feature type="binding site" evidence="1">
    <location>
        <position position="406"/>
    </location>
    <ligand>
        <name>Mn(2+)</name>
        <dbReference type="ChEBI" id="CHEBI:29035"/>
        <label>1</label>
    </ligand>
</feature>
<feature type="binding site" evidence="1">
    <location>
        <position position="443"/>
    </location>
    <ligand>
        <name>Mn(2+)</name>
        <dbReference type="ChEBI" id="CHEBI:29035"/>
        <label>2</label>
    </ligand>
</feature>
<feature type="binding site" evidence="1">
    <location>
        <position position="444"/>
    </location>
    <ligand>
        <name>Mn(2+)</name>
        <dbReference type="ChEBI" id="CHEBI:29035"/>
        <label>2</label>
    </ligand>
</feature>
<feature type="binding site" evidence="1">
    <location>
        <position position="461"/>
    </location>
    <ligand>
        <name>Mn(2+)</name>
        <dbReference type="ChEBI" id="CHEBI:29035"/>
        <label>1</label>
    </ligand>
</feature>
<keyword id="KW-0324">Glycolysis</keyword>
<keyword id="KW-0413">Isomerase</keyword>
<keyword id="KW-0464">Manganese</keyword>
<keyword id="KW-0479">Metal-binding</keyword>